<evidence type="ECO:0000250" key="1"/>
<evidence type="ECO:0000255" key="2">
    <source>
        <dbReference type="PROSITE-ProRule" id="PRU01081"/>
    </source>
</evidence>
<evidence type="ECO:0000269" key="3">
    <source>
    </source>
</evidence>
<evidence type="ECO:0000305" key="4"/>
<evidence type="ECO:0007829" key="5">
    <source>
        <dbReference type="PDB" id="2M1M"/>
    </source>
</evidence>
<organism>
    <name type="scientific">Pisum sativum</name>
    <name type="common">Garden pea</name>
    <name type="synonym">Lathyrus oleraceus</name>
    <dbReference type="NCBI Taxonomy" id="3888"/>
    <lineage>
        <taxon>Eukaryota</taxon>
        <taxon>Viridiplantae</taxon>
        <taxon>Streptophyta</taxon>
        <taxon>Embryophyta</taxon>
        <taxon>Tracheophyta</taxon>
        <taxon>Spermatophyta</taxon>
        <taxon>Magnoliopsida</taxon>
        <taxon>eudicotyledons</taxon>
        <taxon>Gunneridae</taxon>
        <taxon>Pentapetalae</taxon>
        <taxon>rosids</taxon>
        <taxon>fabids</taxon>
        <taxon>Fabales</taxon>
        <taxon>Fabaceae</taxon>
        <taxon>Papilionoideae</taxon>
        <taxon>50 kb inversion clade</taxon>
        <taxon>NPAAA clade</taxon>
        <taxon>Hologalegina</taxon>
        <taxon>IRL clade</taxon>
        <taxon>Fabeae</taxon>
        <taxon>Pisum</taxon>
    </lineage>
</organism>
<name>IAA4_PEA</name>
<proteinExistence type="evidence at protein level"/>
<comment type="function">
    <text evidence="1">Aux/IAA proteins are short-lived transcriptional factors that function as repressors of early auxin response genes at low auxin concentrations. Repression is thought to result from the interaction with auxin response factors (ARFs), proteins that bind to the auxin-responsive promoter element (AuxRE). Formation of heterodimers with ARF proteins may alter their ability to modulate early auxin response genes expression (By similarity).</text>
</comment>
<comment type="subunit">
    <text evidence="1">Homodimers and heterodimers.</text>
</comment>
<comment type="interaction">
    <interactant intactId="EBI-632357">
        <id>P49679</id>
    </interactant>
    <interactant intactId="EBI-630505">
        <id>P49677</id>
        <label>IAA1</label>
    </interactant>
    <organismsDiffer>true</organismsDiffer>
    <experiments>3</experiments>
</comment>
<comment type="subcellular location">
    <subcellularLocation>
        <location>Nucleus</location>
    </subcellularLocation>
</comment>
<comment type="induction">
    <text>By auxin.</text>
</comment>
<comment type="domain">
    <text evidence="1">The N-terminal half of the protein contains two conserved domains I and II. Domain I includes a slightly degenerated ERF-associated amphiphilic repression (EAR) motif which seems to be involved in the activity of transcriptional repression. Domain II is required for the correct degradation of the protein through the SCF-mediated ubiquitin-proteasome pathway. Interactions between Aux/IAA proteins and auxin response factors (ARFs) occur through their C-terminal dimerization domains III and IV (By similarity).</text>
</comment>
<comment type="PTM">
    <text evidence="3">Phosphorylated by phytochrome A in vitro.</text>
</comment>
<comment type="similarity">
    <text evidence="4">Belongs to the Aux/IAA family.</text>
</comment>
<comment type="sequence caution" evidence="4">
    <conflict type="erroneous gene model prediction">
        <sequence resource="EMBL-CDS" id="CAA48298"/>
    </conflict>
</comment>
<protein>
    <recommendedName>
        <fullName>Auxin-induced protein IAA4</fullName>
    </recommendedName>
</protein>
<keyword id="KW-0002">3D-structure</keyword>
<keyword id="KW-0927">Auxin signaling pathway</keyword>
<keyword id="KW-0539">Nucleus</keyword>
<keyword id="KW-0597">Phosphoprotein</keyword>
<keyword id="KW-0678">Repressor</keyword>
<keyword id="KW-0804">Transcription</keyword>
<keyword id="KW-0805">Transcription regulation</keyword>
<reference key="1">
    <citation type="journal article" date="1993" name="J. Mol. Biol.">
        <title>Structural characterization of the early indoleacetic acid-inducible genes, PS-IAA4/5 and PS-IAA6, of pea (Pisum sativum L.).</title>
        <authorList>
            <person name="Oeller P.W."/>
            <person name="Keller J.A."/>
            <person name="Parks J.E."/>
            <person name="Silbert J.E."/>
            <person name="Theologis A."/>
        </authorList>
    </citation>
    <scope>NUCLEOTIDE SEQUENCE [GENOMIC DNA / MRNA]</scope>
    <source>
        <strain>cv. Alaska</strain>
    </source>
</reference>
<reference key="2">
    <citation type="journal article" date="2000" name="Plant Physiol.">
        <title>Aux/IAA proteins are phosphorylated by phytochrome in vitro.</title>
        <authorList>
            <person name="Colon-Carmona A."/>
            <person name="Chen D.L."/>
            <person name="Yeh K.-C."/>
            <person name="Abel S."/>
        </authorList>
    </citation>
    <scope>PHOSPHORYLATION BY PHYTOCHROME A</scope>
</reference>
<feature type="chain" id="PRO_0000112861" description="Auxin-induced protein IAA4">
    <location>
        <begin position="1"/>
        <end position="189"/>
    </location>
</feature>
<feature type="domain" description="PB1" evidence="2">
    <location>
        <begin position="92"/>
        <end position="179"/>
    </location>
</feature>
<feature type="short sequence motif" description="EAR-like (transcriptional repression)">
    <location>
        <begin position="8"/>
        <end position="12"/>
    </location>
</feature>
<feature type="strand" evidence="5">
    <location>
        <begin position="93"/>
        <end position="98"/>
    </location>
</feature>
<feature type="strand" evidence="5">
    <location>
        <begin position="100"/>
        <end position="102"/>
    </location>
</feature>
<feature type="strand" evidence="5">
    <location>
        <begin position="105"/>
        <end position="110"/>
    </location>
</feature>
<feature type="helix" evidence="5">
    <location>
        <begin position="111"/>
        <end position="113"/>
    </location>
</feature>
<feature type="helix" evidence="5">
    <location>
        <begin position="116"/>
        <end position="126"/>
    </location>
</feature>
<feature type="turn" evidence="5">
    <location>
        <begin position="136"/>
        <end position="138"/>
    </location>
</feature>
<feature type="strand" evidence="5">
    <location>
        <begin position="145"/>
        <end position="150"/>
    </location>
</feature>
<feature type="strand" evidence="5">
    <location>
        <begin position="156"/>
        <end position="162"/>
    </location>
</feature>
<feature type="helix" evidence="5">
    <location>
        <begin position="164"/>
        <end position="170"/>
    </location>
</feature>
<feature type="strand" evidence="5">
    <location>
        <begin position="174"/>
        <end position="178"/>
    </location>
</feature>
<feature type="helix" evidence="5">
    <location>
        <begin position="179"/>
        <end position="182"/>
    </location>
</feature>
<sequence length="189" mass="21036">MEFKATELRLGLPGITEEEEKKIIHGSSVVKNNNKRQLPQTSEESVSISKVTNDEHIVESSSAAPPAKAKIVGWPPIRSYRKNSLHEADVGGIFVKVSMDGAPYLRKIDLRVYGGYSELLKALETMFKLTIGEYSEREGYKGSEYAPTYEDKDGDWMLVGDVPWDMFVTSCKRLRIMKGTEAKGLGCGV</sequence>
<gene>
    <name type="primary">IAA4/5</name>
</gene>
<dbReference type="EMBL" id="X68215">
    <property type="protein sequence ID" value="CAA48297.1"/>
    <property type="molecule type" value="mRNA"/>
</dbReference>
<dbReference type="EMBL" id="X68216">
    <property type="protein sequence ID" value="CAA48298.1"/>
    <property type="status" value="ALT_SEQ"/>
    <property type="molecule type" value="Genomic_DNA"/>
</dbReference>
<dbReference type="PIR" id="S39075">
    <property type="entry name" value="S39075"/>
</dbReference>
<dbReference type="PDB" id="2M1M">
    <property type="method" value="NMR"/>
    <property type="chains" value="A=86-189"/>
</dbReference>
<dbReference type="PDBsum" id="2M1M"/>
<dbReference type="BMRB" id="P49679"/>
<dbReference type="SMR" id="P49679"/>
<dbReference type="ELM" id="P49679"/>
<dbReference type="IntAct" id="P49679">
    <property type="interactions" value="1"/>
</dbReference>
<dbReference type="EnsemblPlants" id="Psat6g102800.3">
    <property type="protein sequence ID" value="Psat6g102800.3.cds"/>
    <property type="gene ID" value="Psat6g102800"/>
</dbReference>
<dbReference type="Gramene" id="Psat6g102800.3">
    <property type="protein sequence ID" value="Psat6g102800.3.cds"/>
    <property type="gene ID" value="Psat6g102800"/>
</dbReference>
<dbReference type="EvolutionaryTrace" id="P49679"/>
<dbReference type="GO" id="GO:0005634">
    <property type="term" value="C:nucleus"/>
    <property type="evidence" value="ECO:0007669"/>
    <property type="project" value="UniProtKB-SubCell"/>
</dbReference>
<dbReference type="GO" id="GO:0009734">
    <property type="term" value="P:auxin-activated signaling pathway"/>
    <property type="evidence" value="ECO:0007669"/>
    <property type="project" value="UniProtKB-KW"/>
</dbReference>
<dbReference type="GO" id="GO:0006355">
    <property type="term" value="P:regulation of DNA-templated transcription"/>
    <property type="evidence" value="ECO:0007669"/>
    <property type="project" value="InterPro"/>
</dbReference>
<dbReference type="FunFam" id="3.10.20.90:FF:000078">
    <property type="entry name" value="Auxin-responsive protein"/>
    <property type="match status" value="1"/>
</dbReference>
<dbReference type="Gene3D" id="3.10.20.90">
    <property type="entry name" value="Phosphatidylinositol 3-kinase Catalytic Subunit, Chain A, domain 1"/>
    <property type="match status" value="1"/>
</dbReference>
<dbReference type="InterPro" id="IPR033389">
    <property type="entry name" value="AUX/IAA_dom"/>
</dbReference>
<dbReference type="InterPro" id="IPR003311">
    <property type="entry name" value="AUX_IAA"/>
</dbReference>
<dbReference type="InterPro" id="IPR053793">
    <property type="entry name" value="PB1-like"/>
</dbReference>
<dbReference type="PANTHER" id="PTHR31734">
    <property type="entry name" value="AUXIN-RESPONSIVE PROTEIN IAA17"/>
    <property type="match status" value="1"/>
</dbReference>
<dbReference type="PANTHER" id="PTHR31734:SF227">
    <property type="entry name" value="AUXIN-RESPONSIVE PROTEIN IAA4"/>
    <property type="match status" value="1"/>
</dbReference>
<dbReference type="Pfam" id="PF02309">
    <property type="entry name" value="AUX_IAA"/>
    <property type="match status" value="1"/>
</dbReference>
<dbReference type="SUPFAM" id="SSF54277">
    <property type="entry name" value="CAD &amp; PB1 domains"/>
    <property type="match status" value="1"/>
</dbReference>
<dbReference type="PROSITE" id="PS51745">
    <property type="entry name" value="PB1"/>
    <property type="match status" value="1"/>
</dbReference>
<accession>P49679</accession>